<evidence type="ECO:0000255" key="1">
    <source>
        <dbReference type="HAMAP-Rule" id="MF_00379"/>
    </source>
</evidence>
<sequence length="455" mass="49877">MTLTQEFDTIAAISTPLGEGAIAIVRLSGTDALKIAQSVYKGKNLTQVASHTINYGHIFEEKRLVDEVMVSVMRAPKTFTREDIVEINTHGGIAVTQEILQLLLRNGARLAEPGEFTKRAFLNGRIDLAQAESVMDLIRAKTDKAANIAVKQLDGSLSKMINNIRQEILESLAQVEVNIDYPEYDDVETMTSQMLLEKTAHFEQLLENLLSTAKRGKILREGLKTAIIGRPNVGKSSLLNQLLREEKAIVTDIAGTTRDVITEFANIGGVPLELVDTAGIRETDDLVEAIGVERSKKALAEADLVLLVLDASNELTDKDLELLELSKNSNRIVLLNKTDLPEKIDSTQISGDFIRISALKNENLNAVEEKINQIFFAGEIEAKDATVLSNARHISIVEEALKALKEANSGLALGLPVDLIQVDVTRCWQLLGEITGEAAPDELITQLFSQFCLGK</sequence>
<dbReference type="EC" id="3.6.-.-" evidence="1"/>
<dbReference type="EMBL" id="AE005176">
    <property type="protein sequence ID" value="AAK06340.1"/>
    <property type="molecule type" value="Genomic_DNA"/>
</dbReference>
<dbReference type="PIR" id="B86905">
    <property type="entry name" value="B86905"/>
</dbReference>
<dbReference type="RefSeq" id="NP_268399.1">
    <property type="nucleotide sequence ID" value="NC_002662.1"/>
</dbReference>
<dbReference type="RefSeq" id="WP_003131240.1">
    <property type="nucleotide sequence ID" value="NC_002662.1"/>
</dbReference>
<dbReference type="SMR" id="Q9CDH8"/>
<dbReference type="PaxDb" id="272623-L0157"/>
<dbReference type="EnsemblBacteria" id="AAK06340">
    <property type="protein sequence ID" value="AAK06340"/>
    <property type="gene ID" value="L0157"/>
</dbReference>
<dbReference type="GeneID" id="89634582"/>
<dbReference type="KEGG" id="lla:L0157"/>
<dbReference type="PATRIC" id="fig|272623.7.peg.2407"/>
<dbReference type="eggNOG" id="COG0486">
    <property type="taxonomic scope" value="Bacteria"/>
</dbReference>
<dbReference type="HOGENOM" id="CLU_019624_4_1_9"/>
<dbReference type="OrthoDB" id="9805918at2"/>
<dbReference type="Proteomes" id="UP000002196">
    <property type="component" value="Chromosome"/>
</dbReference>
<dbReference type="GO" id="GO:0005829">
    <property type="term" value="C:cytosol"/>
    <property type="evidence" value="ECO:0007669"/>
    <property type="project" value="TreeGrafter"/>
</dbReference>
<dbReference type="GO" id="GO:0005525">
    <property type="term" value="F:GTP binding"/>
    <property type="evidence" value="ECO:0007669"/>
    <property type="project" value="UniProtKB-UniRule"/>
</dbReference>
<dbReference type="GO" id="GO:0003924">
    <property type="term" value="F:GTPase activity"/>
    <property type="evidence" value="ECO:0007669"/>
    <property type="project" value="UniProtKB-UniRule"/>
</dbReference>
<dbReference type="GO" id="GO:0046872">
    <property type="term" value="F:metal ion binding"/>
    <property type="evidence" value="ECO:0007669"/>
    <property type="project" value="UniProtKB-KW"/>
</dbReference>
<dbReference type="GO" id="GO:0030488">
    <property type="term" value="P:tRNA methylation"/>
    <property type="evidence" value="ECO:0007669"/>
    <property type="project" value="TreeGrafter"/>
</dbReference>
<dbReference type="GO" id="GO:0002098">
    <property type="term" value="P:tRNA wobble uridine modification"/>
    <property type="evidence" value="ECO:0007669"/>
    <property type="project" value="TreeGrafter"/>
</dbReference>
<dbReference type="CDD" id="cd04164">
    <property type="entry name" value="trmE"/>
    <property type="match status" value="1"/>
</dbReference>
<dbReference type="CDD" id="cd14858">
    <property type="entry name" value="TrmE_N"/>
    <property type="match status" value="1"/>
</dbReference>
<dbReference type="FunFam" id="3.30.1360.120:FF:000003">
    <property type="entry name" value="tRNA modification GTPase MnmE"/>
    <property type="match status" value="1"/>
</dbReference>
<dbReference type="FunFam" id="3.40.50.300:FF:000494">
    <property type="entry name" value="tRNA modification GTPase MnmE"/>
    <property type="match status" value="1"/>
</dbReference>
<dbReference type="Gene3D" id="3.40.50.300">
    <property type="entry name" value="P-loop containing nucleotide triphosphate hydrolases"/>
    <property type="match status" value="1"/>
</dbReference>
<dbReference type="Gene3D" id="3.30.1360.120">
    <property type="entry name" value="Probable tRNA modification gtpase trme, domain 1"/>
    <property type="match status" value="1"/>
</dbReference>
<dbReference type="Gene3D" id="1.20.120.430">
    <property type="entry name" value="tRNA modification GTPase MnmE domain 2"/>
    <property type="match status" value="1"/>
</dbReference>
<dbReference type="HAMAP" id="MF_00379">
    <property type="entry name" value="GTPase_MnmE"/>
    <property type="match status" value="1"/>
</dbReference>
<dbReference type="InterPro" id="IPR031168">
    <property type="entry name" value="G_TrmE"/>
</dbReference>
<dbReference type="InterPro" id="IPR006073">
    <property type="entry name" value="GTP-bd"/>
</dbReference>
<dbReference type="InterPro" id="IPR018948">
    <property type="entry name" value="GTP-bd_TrmE_N"/>
</dbReference>
<dbReference type="InterPro" id="IPR004520">
    <property type="entry name" value="GTPase_MnmE"/>
</dbReference>
<dbReference type="InterPro" id="IPR027368">
    <property type="entry name" value="MnmE_dom2"/>
</dbReference>
<dbReference type="InterPro" id="IPR025867">
    <property type="entry name" value="MnmE_helical"/>
</dbReference>
<dbReference type="InterPro" id="IPR027417">
    <property type="entry name" value="P-loop_NTPase"/>
</dbReference>
<dbReference type="InterPro" id="IPR005225">
    <property type="entry name" value="Small_GTP-bd"/>
</dbReference>
<dbReference type="InterPro" id="IPR027266">
    <property type="entry name" value="TrmE/GcvT_dom1"/>
</dbReference>
<dbReference type="NCBIfam" id="TIGR00450">
    <property type="entry name" value="mnmE_trmE_thdF"/>
    <property type="match status" value="1"/>
</dbReference>
<dbReference type="NCBIfam" id="NF003661">
    <property type="entry name" value="PRK05291.1-3"/>
    <property type="match status" value="1"/>
</dbReference>
<dbReference type="NCBIfam" id="TIGR00231">
    <property type="entry name" value="small_GTP"/>
    <property type="match status" value="1"/>
</dbReference>
<dbReference type="PANTHER" id="PTHR42714">
    <property type="entry name" value="TRNA MODIFICATION GTPASE GTPBP3"/>
    <property type="match status" value="1"/>
</dbReference>
<dbReference type="PANTHER" id="PTHR42714:SF2">
    <property type="entry name" value="TRNA MODIFICATION GTPASE GTPBP3, MITOCHONDRIAL"/>
    <property type="match status" value="1"/>
</dbReference>
<dbReference type="Pfam" id="PF01926">
    <property type="entry name" value="MMR_HSR1"/>
    <property type="match status" value="1"/>
</dbReference>
<dbReference type="Pfam" id="PF12631">
    <property type="entry name" value="MnmE_helical"/>
    <property type="match status" value="1"/>
</dbReference>
<dbReference type="Pfam" id="PF10396">
    <property type="entry name" value="TrmE_N"/>
    <property type="match status" value="1"/>
</dbReference>
<dbReference type="SUPFAM" id="SSF52540">
    <property type="entry name" value="P-loop containing nucleoside triphosphate hydrolases"/>
    <property type="match status" value="1"/>
</dbReference>
<dbReference type="SUPFAM" id="SSF116878">
    <property type="entry name" value="TrmE connector domain"/>
    <property type="match status" value="1"/>
</dbReference>
<dbReference type="PROSITE" id="PS51709">
    <property type="entry name" value="G_TRME"/>
    <property type="match status" value="1"/>
</dbReference>
<name>MNME_LACLA</name>
<comment type="function">
    <text evidence="1">Exhibits a very high intrinsic GTPase hydrolysis rate. Involved in the addition of a carboxymethylaminomethyl (cmnm) group at the wobble position (U34) of certain tRNAs, forming tRNA-cmnm(5)s(2)U34.</text>
</comment>
<comment type="cofactor">
    <cofactor evidence="1">
        <name>K(+)</name>
        <dbReference type="ChEBI" id="CHEBI:29103"/>
    </cofactor>
    <text evidence="1">Binds 1 potassium ion per subunit.</text>
</comment>
<comment type="subunit">
    <text evidence="1">Homodimer. Heterotetramer of two MnmE and two MnmG subunits.</text>
</comment>
<comment type="subcellular location">
    <subcellularLocation>
        <location evidence="1">Cytoplasm</location>
    </subcellularLocation>
</comment>
<comment type="similarity">
    <text evidence="1">Belongs to the TRAFAC class TrmE-Era-EngA-EngB-Septin-like GTPase superfamily. TrmE GTPase family.</text>
</comment>
<organism>
    <name type="scientific">Lactococcus lactis subsp. lactis (strain IL1403)</name>
    <name type="common">Streptococcus lactis</name>
    <dbReference type="NCBI Taxonomy" id="272623"/>
    <lineage>
        <taxon>Bacteria</taxon>
        <taxon>Bacillati</taxon>
        <taxon>Bacillota</taxon>
        <taxon>Bacilli</taxon>
        <taxon>Lactobacillales</taxon>
        <taxon>Streptococcaceae</taxon>
        <taxon>Lactococcus</taxon>
    </lineage>
</organism>
<gene>
    <name evidence="1" type="primary">mnmE</name>
    <name evidence="1" type="synonym">thdF</name>
    <name evidence="1" type="synonym">trmE</name>
    <name type="ordered locus">LL2242</name>
    <name type="ORF">L0157</name>
</gene>
<protein>
    <recommendedName>
        <fullName evidence="1">tRNA modification GTPase MnmE</fullName>
        <ecNumber evidence="1">3.6.-.-</ecNumber>
    </recommendedName>
</protein>
<feature type="chain" id="PRO_0000188884" description="tRNA modification GTPase MnmE">
    <location>
        <begin position="1"/>
        <end position="455"/>
    </location>
</feature>
<feature type="domain" description="TrmE-type G">
    <location>
        <begin position="222"/>
        <end position="376"/>
    </location>
</feature>
<feature type="binding site" evidence="1">
    <location>
        <position position="26"/>
    </location>
    <ligand>
        <name>(6S)-5-formyl-5,6,7,8-tetrahydrofolate</name>
        <dbReference type="ChEBI" id="CHEBI:57457"/>
    </ligand>
</feature>
<feature type="binding site" evidence="1">
    <location>
        <position position="86"/>
    </location>
    <ligand>
        <name>(6S)-5-formyl-5,6,7,8-tetrahydrofolate</name>
        <dbReference type="ChEBI" id="CHEBI:57457"/>
    </ligand>
</feature>
<feature type="binding site" evidence="1">
    <location>
        <position position="125"/>
    </location>
    <ligand>
        <name>(6S)-5-formyl-5,6,7,8-tetrahydrofolate</name>
        <dbReference type="ChEBI" id="CHEBI:57457"/>
    </ligand>
</feature>
<feature type="binding site" evidence="1">
    <location>
        <begin position="232"/>
        <end position="237"/>
    </location>
    <ligand>
        <name>GTP</name>
        <dbReference type="ChEBI" id="CHEBI:37565"/>
    </ligand>
</feature>
<feature type="binding site" evidence="1">
    <location>
        <position position="232"/>
    </location>
    <ligand>
        <name>K(+)</name>
        <dbReference type="ChEBI" id="CHEBI:29103"/>
    </ligand>
</feature>
<feature type="binding site" evidence="1">
    <location>
        <position position="236"/>
    </location>
    <ligand>
        <name>Mg(2+)</name>
        <dbReference type="ChEBI" id="CHEBI:18420"/>
    </ligand>
</feature>
<feature type="binding site" evidence="1">
    <location>
        <begin position="251"/>
        <end position="257"/>
    </location>
    <ligand>
        <name>GTP</name>
        <dbReference type="ChEBI" id="CHEBI:37565"/>
    </ligand>
</feature>
<feature type="binding site" evidence="1">
    <location>
        <position position="251"/>
    </location>
    <ligand>
        <name>K(+)</name>
        <dbReference type="ChEBI" id="CHEBI:29103"/>
    </ligand>
</feature>
<feature type="binding site" evidence="1">
    <location>
        <position position="253"/>
    </location>
    <ligand>
        <name>K(+)</name>
        <dbReference type="ChEBI" id="CHEBI:29103"/>
    </ligand>
</feature>
<feature type="binding site" evidence="1">
    <location>
        <position position="256"/>
    </location>
    <ligand>
        <name>K(+)</name>
        <dbReference type="ChEBI" id="CHEBI:29103"/>
    </ligand>
</feature>
<feature type="binding site" evidence="1">
    <location>
        <position position="257"/>
    </location>
    <ligand>
        <name>Mg(2+)</name>
        <dbReference type="ChEBI" id="CHEBI:18420"/>
    </ligand>
</feature>
<feature type="binding site" evidence="1">
    <location>
        <begin position="276"/>
        <end position="279"/>
    </location>
    <ligand>
        <name>GTP</name>
        <dbReference type="ChEBI" id="CHEBI:37565"/>
    </ligand>
</feature>
<feature type="binding site" evidence="1">
    <location>
        <position position="455"/>
    </location>
    <ligand>
        <name>(6S)-5-formyl-5,6,7,8-tetrahydrofolate</name>
        <dbReference type="ChEBI" id="CHEBI:57457"/>
    </ligand>
</feature>
<accession>Q9CDH8</accession>
<proteinExistence type="inferred from homology"/>
<keyword id="KW-0963">Cytoplasm</keyword>
<keyword id="KW-0342">GTP-binding</keyword>
<keyword id="KW-0378">Hydrolase</keyword>
<keyword id="KW-0460">Magnesium</keyword>
<keyword id="KW-0479">Metal-binding</keyword>
<keyword id="KW-0547">Nucleotide-binding</keyword>
<keyword id="KW-0630">Potassium</keyword>
<keyword id="KW-1185">Reference proteome</keyword>
<keyword id="KW-0819">tRNA processing</keyword>
<reference key="1">
    <citation type="journal article" date="2001" name="Genome Res.">
        <title>The complete genome sequence of the lactic acid bacterium Lactococcus lactis ssp. lactis IL1403.</title>
        <authorList>
            <person name="Bolotin A."/>
            <person name="Wincker P."/>
            <person name="Mauger S."/>
            <person name="Jaillon O."/>
            <person name="Malarme K."/>
            <person name="Weissenbach J."/>
            <person name="Ehrlich S.D."/>
            <person name="Sorokin A."/>
        </authorList>
    </citation>
    <scope>NUCLEOTIDE SEQUENCE [LARGE SCALE GENOMIC DNA]</scope>
    <source>
        <strain>IL1403</strain>
    </source>
</reference>